<sequence length="807" mass="89556">MQFFGRLVNTLSSVTNLFSNPFRVKEVSLADYASSERVREEGQLILLQNASNRTWDCVLVSPRNPQSGFRLFQLESEADALVNFQQYSSQLPPFYESSVQVLHVEVLQHLTDLIRNHPSWTVTHLAVELGIRECFHHSRIISCANSTENEEGCTPLHLACRKGDSEILVELVQYCHAQMDVTDNKGETAFHYAVQGDNPQVLQLLGKNASAGLNQVNNQGLTPLHLACQMGKQEMVRVLLLCNARCNIMGPGGFPIHTAMKFSQKGCAEMIISMDSNQIHSKDPRYGASPLHWAKNAEMARMLLKRGCDVDSTSASGNTALHVAVTRNRFDCVMVLLTYGANAGARGEHGNTPLHLAMSKDNMEMVKALIVFGAEVDTPNDFGETPAFIASKISKLITRKALLTLLKTVGADYHFPFIQGVSTEQSSAAGPHPFFSLDRTQPPTISLNNLELQDLMPVSRARKPAFILSSMRDEKRSHDHLLCLDGGGVKGLVIIQLLIAIEKASGVATKDLFDWVAGTSTGGILALAILHSKSMAYMRGVYFRMKDEVFRGSRPYESGPLEEFLKREFGEHTKMTDVKKPKVMLTGTLSDRQPAELHLFRNYDAPEAVREPRCTPNINLKPPTQPADQLVWRAARSSGAAPTYFRPNGRFLDGGLLANNPTLDAMTEIHEYNQDMIRKGQGNKVKKLSIVVSLGTGKSPQVPVTCVDVFRPSNPWELAKTVFGAKELGKMVVDCCTDPDGRAVDRARAWCEMVGIQYFRLNPQLGSDIMLDEVSDAVLVNALWETEVYIYEHREEFQKLVQLLLSP</sequence>
<proteinExistence type="evidence at protein level"/>
<accession>P97570</accession>
<accession>G3V7M8</accession>
<accession>Q66HD1</accession>
<organism>
    <name type="scientific">Rattus norvegicus</name>
    <name type="common">Rat</name>
    <dbReference type="NCBI Taxonomy" id="10116"/>
    <lineage>
        <taxon>Eukaryota</taxon>
        <taxon>Metazoa</taxon>
        <taxon>Chordata</taxon>
        <taxon>Craniata</taxon>
        <taxon>Vertebrata</taxon>
        <taxon>Euteleostomi</taxon>
        <taxon>Mammalia</taxon>
        <taxon>Eutheria</taxon>
        <taxon>Euarchontoglires</taxon>
        <taxon>Glires</taxon>
        <taxon>Rodentia</taxon>
        <taxon>Myomorpha</taxon>
        <taxon>Muroidea</taxon>
        <taxon>Muridae</taxon>
        <taxon>Murinae</taxon>
        <taxon>Rattus</taxon>
    </lineage>
</organism>
<reference key="1">
    <citation type="journal article" date="1997" name="J. Biol. Chem.">
        <title>Pancreatic islets express a Ca2+-independent phospholipase A2 enzyme that contains a repeated structural homologous to the integral membrane protein binding domain of ankyrin.</title>
        <authorList>
            <person name="Ma Z."/>
            <person name="Ramanadham S."/>
            <person name="Kempe K."/>
            <person name="Chi X.S."/>
            <person name="Ladenson J."/>
            <person name="Turk J."/>
        </authorList>
    </citation>
    <scope>NUCLEOTIDE SEQUENCE [MRNA] (ISOFORM SHORT)</scope>
    <scope>FUNCTION</scope>
    <scope>CATALYTIC ACTIVITY</scope>
    <scope>ACTIVITY REGULATION</scope>
    <scope>BIOPHYSICOCHEMICAL PROPERTIES</scope>
    <scope>TISSUE SPECIFICITY</scope>
    <source>
        <strain>Sprague-Dawley</strain>
        <tissue>Pancreatic islet</tissue>
    </source>
</reference>
<reference key="2">
    <citation type="journal article" date="2004" name="Nature">
        <title>Genome sequence of the Brown Norway rat yields insights into mammalian evolution.</title>
        <authorList>
            <person name="Gibbs R.A."/>
            <person name="Weinstock G.M."/>
            <person name="Metzker M.L."/>
            <person name="Muzny D.M."/>
            <person name="Sodergren E.J."/>
            <person name="Scherer S."/>
            <person name="Scott G."/>
            <person name="Steffen D."/>
            <person name="Worley K.C."/>
            <person name="Burch P.E."/>
            <person name="Okwuonu G."/>
            <person name="Hines S."/>
            <person name="Lewis L."/>
            <person name="Deramo C."/>
            <person name="Delgado O."/>
            <person name="Dugan-Rocha S."/>
            <person name="Miner G."/>
            <person name="Morgan M."/>
            <person name="Hawes A."/>
            <person name="Gill R."/>
            <person name="Holt R.A."/>
            <person name="Adams M.D."/>
            <person name="Amanatides P.G."/>
            <person name="Baden-Tillson H."/>
            <person name="Barnstead M."/>
            <person name="Chin S."/>
            <person name="Evans C.A."/>
            <person name="Ferriera S."/>
            <person name="Fosler C."/>
            <person name="Glodek A."/>
            <person name="Gu Z."/>
            <person name="Jennings D."/>
            <person name="Kraft C.L."/>
            <person name="Nguyen T."/>
            <person name="Pfannkoch C.M."/>
            <person name="Sitter C."/>
            <person name="Sutton G.G."/>
            <person name="Venter J.C."/>
            <person name="Woodage T."/>
            <person name="Smith D."/>
            <person name="Lee H.-M."/>
            <person name="Gustafson E."/>
            <person name="Cahill P."/>
            <person name="Kana A."/>
            <person name="Doucette-Stamm L."/>
            <person name="Weinstock K."/>
            <person name="Fechtel K."/>
            <person name="Weiss R.B."/>
            <person name="Dunn D.M."/>
            <person name="Green E.D."/>
            <person name="Blakesley R.W."/>
            <person name="Bouffard G.G."/>
            <person name="De Jong P.J."/>
            <person name="Osoegawa K."/>
            <person name="Zhu B."/>
            <person name="Marra M."/>
            <person name="Schein J."/>
            <person name="Bosdet I."/>
            <person name="Fjell C."/>
            <person name="Jones S."/>
            <person name="Krzywinski M."/>
            <person name="Mathewson C."/>
            <person name="Siddiqui A."/>
            <person name="Wye N."/>
            <person name="McPherson J."/>
            <person name="Zhao S."/>
            <person name="Fraser C.M."/>
            <person name="Shetty J."/>
            <person name="Shatsman S."/>
            <person name="Geer K."/>
            <person name="Chen Y."/>
            <person name="Abramzon S."/>
            <person name="Nierman W.C."/>
            <person name="Havlak P.H."/>
            <person name="Chen R."/>
            <person name="Durbin K.J."/>
            <person name="Egan A."/>
            <person name="Ren Y."/>
            <person name="Song X.-Z."/>
            <person name="Li B."/>
            <person name="Liu Y."/>
            <person name="Qin X."/>
            <person name="Cawley S."/>
            <person name="Cooney A.J."/>
            <person name="D'Souza L.M."/>
            <person name="Martin K."/>
            <person name="Wu J.Q."/>
            <person name="Gonzalez-Garay M.L."/>
            <person name="Jackson A.R."/>
            <person name="Kalafus K.J."/>
            <person name="McLeod M.P."/>
            <person name="Milosavljevic A."/>
            <person name="Virk D."/>
            <person name="Volkov A."/>
            <person name="Wheeler D.A."/>
            <person name="Zhang Z."/>
            <person name="Bailey J.A."/>
            <person name="Eichler E.E."/>
            <person name="Tuzun E."/>
            <person name="Birney E."/>
            <person name="Mongin E."/>
            <person name="Ureta-Vidal A."/>
            <person name="Woodwark C."/>
            <person name="Zdobnov E."/>
            <person name="Bork P."/>
            <person name="Suyama M."/>
            <person name="Torrents D."/>
            <person name="Alexandersson M."/>
            <person name="Trask B.J."/>
            <person name="Young J.M."/>
            <person name="Huang H."/>
            <person name="Wang H."/>
            <person name="Xing H."/>
            <person name="Daniels S."/>
            <person name="Gietzen D."/>
            <person name="Schmidt J."/>
            <person name="Stevens K."/>
            <person name="Vitt U."/>
            <person name="Wingrove J."/>
            <person name="Camara F."/>
            <person name="Mar Alba M."/>
            <person name="Abril J.F."/>
            <person name="Guigo R."/>
            <person name="Smit A."/>
            <person name="Dubchak I."/>
            <person name="Rubin E.M."/>
            <person name="Couronne O."/>
            <person name="Poliakov A."/>
            <person name="Huebner N."/>
            <person name="Ganten D."/>
            <person name="Goesele C."/>
            <person name="Hummel O."/>
            <person name="Kreitler T."/>
            <person name="Lee Y.-A."/>
            <person name="Monti J."/>
            <person name="Schulz H."/>
            <person name="Zimdahl H."/>
            <person name="Himmelbauer H."/>
            <person name="Lehrach H."/>
            <person name="Jacob H.J."/>
            <person name="Bromberg S."/>
            <person name="Gullings-Handley J."/>
            <person name="Jensen-Seaman M.I."/>
            <person name="Kwitek A.E."/>
            <person name="Lazar J."/>
            <person name="Pasko D."/>
            <person name="Tonellato P.J."/>
            <person name="Twigger S."/>
            <person name="Ponting C.P."/>
            <person name="Duarte J.M."/>
            <person name="Rice S."/>
            <person name="Goodstadt L."/>
            <person name="Beatson S.A."/>
            <person name="Emes R.D."/>
            <person name="Winter E.E."/>
            <person name="Webber C."/>
            <person name="Brandt P."/>
            <person name="Nyakatura G."/>
            <person name="Adetobi M."/>
            <person name="Chiaromonte F."/>
            <person name="Elnitski L."/>
            <person name="Eswara P."/>
            <person name="Hardison R.C."/>
            <person name="Hou M."/>
            <person name="Kolbe D."/>
            <person name="Makova K."/>
            <person name="Miller W."/>
            <person name="Nekrutenko A."/>
            <person name="Riemer C."/>
            <person name="Schwartz S."/>
            <person name="Taylor J."/>
            <person name="Yang S."/>
            <person name="Zhang Y."/>
            <person name="Lindpaintner K."/>
            <person name="Andrews T.D."/>
            <person name="Caccamo M."/>
            <person name="Clamp M."/>
            <person name="Clarke L."/>
            <person name="Curwen V."/>
            <person name="Durbin R.M."/>
            <person name="Eyras E."/>
            <person name="Searle S.M."/>
            <person name="Cooper G.M."/>
            <person name="Batzoglou S."/>
            <person name="Brudno M."/>
            <person name="Sidow A."/>
            <person name="Stone E.A."/>
            <person name="Payseur B.A."/>
            <person name="Bourque G."/>
            <person name="Lopez-Otin C."/>
            <person name="Puente X.S."/>
            <person name="Chakrabarti K."/>
            <person name="Chatterji S."/>
            <person name="Dewey C."/>
            <person name="Pachter L."/>
            <person name="Bray N."/>
            <person name="Yap V.B."/>
            <person name="Caspi A."/>
            <person name="Tesler G."/>
            <person name="Pevzner P.A."/>
            <person name="Haussler D."/>
            <person name="Roskin K.M."/>
            <person name="Baertsch R."/>
            <person name="Clawson H."/>
            <person name="Furey T.S."/>
            <person name="Hinrichs A.S."/>
            <person name="Karolchik D."/>
            <person name="Kent W.J."/>
            <person name="Rosenbloom K.R."/>
            <person name="Trumbower H."/>
            <person name="Weirauch M."/>
            <person name="Cooper D.N."/>
            <person name="Stenson P.D."/>
            <person name="Ma B."/>
            <person name="Brent M."/>
            <person name="Arumugam M."/>
            <person name="Shteynberg D."/>
            <person name="Copley R.R."/>
            <person name="Taylor M.S."/>
            <person name="Riethman H."/>
            <person name="Mudunuri U."/>
            <person name="Peterson J."/>
            <person name="Guyer M."/>
            <person name="Felsenfeld A."/>
            <person name="Old S."/>
            <person name="Mockrin S."/>
            <person name="Collins F.S."/>
        </authorList>
    </citation>
    <scope>NUCLEOTIDE SEQUENCE [LARGE SCALE GENOMIC DNA]</scope>
    <source>
        <strain>Brown Norway</strain>
    </source>
</reference>
<reference key="3">
    <citation type="submission" date="2005-09" db="EMBL/GenBank/DDBJ databases">
        <authorList>
            <person name="Mural R.J."/>
            <person name="Li P.W."/>
            <person name="Adams M.D."/>
            <person name="Amanatides P.G."/>
            <person name="Baden-Tillson H."/>
            <person name="Barnstead M."/>
            <person name="Chin S.H."/>
            <person name="Dew I."/>
            <person name="Evans C.A."/>
            <person name="Ferriera S."/>
            <person name="Flanigan M."/>
            <person name="Fosler C."/>
            <person name="Glodek A."/>
            <person name="Gu Z."/>
            <person name="Holt R.A."/>
            <person name="Jennings D."/>
            <person name="Kraft C.L."/>
            <person name="Lu F."/>
            <person name="Nguyen T."/>
            <person name="Nusskern D.R."/>
            <person name="Pfannkoch C.M."/>
            <person name="Sitter C."/>
            <person name="Sutton G.G."/>
            <person name="Venter J.C."/>
            <person name="Wang Z."/>
            <person name="Woodage T."/>
            <person name="Zheng X.H."/>
            <person name="Zhong F."/>
        </authorList>
    </citation>
    <scope>NUCLEOTIDE SEQUENCE [LARGE SCALE GENOMIC DNA]</scope>
    <source>
        <strain>Brown Norway</strain>
    </source>
</reference>
<reference key="4">
    <citation type="journal article" date="2004" name="Genome Res.">
        <title>The status, quality, and expansion of the NIH full-length cDNA project: the Mammalian Gene Collection (MGC).</title>
        <authorList>
            <consortium name="The MGC Project Team"/>
        </authorList>
    </citation>
    <scope>NUCLEOTIDE SEQUENCE [LARGE SCALE MRNA] (ISOFORM LONG)</scope>
    <source>
        <tissue>Testis</tissue>
    </source>
</reference>
<reference key="5">
    <citation type="journal article" date="2001" name="J. Biol. Chem.">
        <title>Identification of the calmodulin-binding domain of recombinant calcium-independent phospholipase A2beta. implications for structure and function.</title>
        <authorList>
            <person name="Jenkins C.M."/>
            <person name="Wolf M.J."/>
            <person name="Mancuso D.J."/>
            <person name="Gross R.W."/>
        </authorList>
    </citation>
    <scope>ACTIVITY REGULATION</scope>
    <scope>CALMODULIN-BINDING REGIONS</scope>
</reference>
<reference key="6">
    <citation type="journal article" date="2008" name="Biochemistry">
        <title>Skeletal muscle group VIA phospholipase A2 (iPLA2beta): expression and role in fatty acid oxidation.</title>
        <authorList>
            <person name="Carper M.J."/>
            <person name="Zhang S."/>
            <person name="Turk J."/>
            <person name="Ramanadham S."/>
        </authorList>
    </citation>
    <scope>FUNCTION</scope>
    <scope>CATALYTIC ACTIVITY</scope>
    <scope>TISSUE SPECIFICITY</scope>
    <scope>ACTIVITY REGULATION</scope>
</reference>
<reference key="7">
    <citation type="journal article" date="2012" name="Nat. Commun.">
        <title>Quantitative maps of protein phosphorylation sites across 14 different rat organs and tissues.</title>
        <authorList>
            <person name="Lundby A."/>
            <person name="Secher A."/>
            <person name="Lage K."/>
            <person name="Nordsborg N.B."/>
            <person name="Dmytriyev A."/>
            <person name="Lundby C."/>
            <person name="Olsen J.V."/>
        </authorList>
    </citation>
    <scope>PHOSPHORYLATION [LARGE SCALE ANALYSIS] AT SER-13</scope>
    <scope>IDENTIFICATION BY MASS SPECTROMETRY [LARGE SCALE ANALYSIS]</scope>
</reference>
<reference key="8">
    <citation type="journal article" date="2014" name="J. Biol. Chem.">
        <title>Group VIA phospholipase A2 mitigates palmitate-induced beta-cell mitochondrial injury and apoptosis.</title>
        <authorList>
            <person name="Song H."/>
            <person name="Wohltmann M."/>
            <person name="Tan M."/>
            <person name="Ladenson J.H."/>
            <person name="Turk J."/>
        </authorList>
    </citation>
    <scope>FUNCTION</scope>
    <scope>CATALYTIC ACTIVITY</scope>
</reference>
<evidence type="ECO:0000250" key="1">
    <source>
        <dbReference type="UniProtKB" id="A0A3L7I2I8"/>
    </source>
</evidence>
<evidence type="ECO:0000250" key="2">
    <source>
        <dbReference type="UniProtKB" id="O60733"/>
    </source>
</evidence>
<evidence type="ECO:0000250" key="3">
    <source>
        <dbReference type="UniProtKB" id="P97819"/>
    </source>
</evidence>
<evidence type="ECO:0000255" key="4"/>
<evidence type="ECO:0000255" key="5">
    <source>
        <dbReference type="PROSITE-ProRule" id="PRU01161"/>
    </source>
</evidence>
<evidence type="ECO:0000269" key="6">
    <source>
    </source>
</evidence>
<evidence type="ECO:0000269" key="7">
    <source>
    </source>
</evidence>
<evidence type="ECO:0000269" key="8">
    <source>
    </source>
</evidence>
<evidence type="ECO:0000269" key="9">
    <source>
    </source>
</evidence>
<evidence type="ECO:0000303" key="10">
    <source>
    </source>
</evidence>
<evidence type="ECO:0000305" key="11"/>
<evidence type="ECO:0000305" key="12">
    <source>
    </source>
</evidence>
<evidence type="ECO:0000305" key="13">
    <source>
    </source>
</evidence>
<evidence type="ECO:0000305" key="14">
    <source>
    </source>
</evidence>
<evidence type="ECO:0007744" key="15">
    <source>
    </source>
</evidence>
<gene>
    <name type="primary">Pla2g6</name>
    <name type="synonym">Pnpla9</name>
</gene>
<keyword id="KW-0025">Alternative splicing</keyword>
<keyword id="KW-0040">ANK repeat</keyword>
<keyword id="KW-0112">Calmodulin-binding</keyword>
<keyword id="KW-1003">Cell membrane</keyword>
<keyword id="KW-0966">Cell projection</keyword>
<keyword id="KW-0145">Chemotaxis</keyword>
<keyword id="KW-0963">Cytoplasm</keyword>
<keyword id="KW-0378">Hydrolase</keyword>
<keyword id="KW-0443">Lipid metabolism</keyword>
<keyword id="KW-0472">Membrane</keyword>
<keyword id="KW-0496">Mitochondrion</keyword>
<keyword id="KW-1208">Phospholipid metabolism</keyword>
<keyword id="KW-0597">Phosphoprotein</keyword>
<keyword id="KW-1185">Reference proteome</keyword>
<keyword id="KW-0677">Repeat</keyword>
<keyword id="KW-0812">Transmembrane</keyword>
<keyword id="KW-1133">Transmembrane helix</keyword>
<feature type="chain" id="PRO_0000067039" description="85/88 kDa calcium-independent phospholipase A2">
    <location>
        <begin position="1"/>
        <end position="807"/>
    </location>
</feature>
<feature type="transmembrane region" description="Helical" evidence="4">
    <location>
        <begin position="481"/>
        <end position="501"/>
    </location>
</feature>
<feature type="transmembrane region" description="Helical" evidence="4">
    <location>
        <begin position="512"/>
        <end position="532"/>
    </location>
</feature>
<feature type="repeat" description="ANK 1" evidence="1">
    <location>
        <begin position="120"/>
        <end position="147"/>
    </location>
</feature>
<feature type="repeat" description="ANK 1" evidence="4">
    <location>
        <begin position="151"/>
        <end position="181"/>
    </location>
</feature>
<feature type="repeat" description="ANK 2" evidence="4">
    <location>
        <begin position="185"/>
        <end position="215"/>
    </location>
</feature>
<feature type="repeat" description="ANK 3" evidence="4">
    <location>
        <begin position="219"/>
        <end position="248"/>
    </location>
</feature>
<feature type="repeat" description="ANK 4" evidence="4">
    <location>
        <begin position="251"/>
        <end position="281"/>
    </location>
</feature>
<feature type="repeat" description="ANK 5" evidence="4">
    <location>
        <begin position="286"/>
        <end position="312"/>
    </location>
</feature>
<feature type="repeat" description="ANK 6" evidence="4">
    <location>
        <begin position="316"/>
        <end position="345"/>
    </location>
</feature>
<feature type="repeat" description="ANK 7" evidence="4">
    <location>
        <begin position="349"/>
        <end position="378"/>
    </location>
</feature>
<feature type="repeat" description="ANK 9" evidence="1">
    <location>
        <begin position="382"/>
        <end position="403"/>
    </location>
</feature>
<feature type="domain" description="PNPLA" evidence="5">
    <location>
        <begin position="482"/>
        <end position="666"/>
    </location>
</feature>
<feature type="region of interest" description="Calmodulin-binding (1-9-14 motif)" evidence="6">
    <location>
        <begin position="678"/>
        <end position="687"/>
    </location>
</feature>
<feature type="region of interest" description="Calmodulin-binding (IQ motif)" evidence="6">
    <location>
        <begin position="749"/>
        <end position="760"/>
    </location>
</feature>
<feature type="short sequence motif" description="GXGXXG" evidence="5">
    <location>
        <begin position="486"/>
        <end position="491"/>
    </location>
</feature>
<feature type="short sequence motif" description="GXSXG" evidence="5">
    <location>
        <begin position="518"/>
        <end position="522"/>
    </location>
</feature>
<feature type="short sequence motif" description="DGA/G" evidence="5">
    <location>
        <begin position="653"/>
        <end position="655"/>
    </location>
</feature>
<feature type="active site" description="Nucleophile" evidence="5">
    <location>
        <position position="520"/>
    </location>
</feature>
<feature type="active site" description="Proton acceptor" evidence="5">
    <location>
        <position position="653"/>
    </location>
</feature>
<feature type="modified residue" description="Phosphoserine" evidence="15">
    <location>
        <position position="13"/>
    </location>
</feature>
<feature type="splice variant" id="VSP_044365" description="In isoform Short." evidence="10">
    <original>LITRKALLTLLKTVGADYHFPFIQGVSTEQSSAAGPHPFFSLDRTQPPTISLNNLE</original>
    <variation>Q</variation>
    <location>
        <begin position="396"/>
        <end position="451"/>
    </location>
</feature>
<feature type="sequence conflict" description="In Ref. 1; AAC53136." evidence="11" ref="1">
    <original>V</original>
    <variation>A</variation>
    <location>
        <position position="24"/>
    </location>
</feature>
<feature type="sequence conflict" description="In Ref. 1; AAC53136." evidence="11" ref="1">
    <original>V</original>
    <variation>D</variation>
    <location>
        <position position="58"/>
    </location>
</feature>
<feature type="sequence conflict" description="In Ref. 1; AAC53136." evidence="11" ref="1">
    <original>G</original>
    <variation>D</variation>
    <location>
        <position position="68"/>
    </location>
</feature>
<feature type="sequence conflict" description="In Ref. 1; AAC53136." evidence="11" ref="1">
    <original>A</original>
    <variation>V</variation>
    <location>
        <position position="80"/>
    </location>
</feature>
<feature type="sequence conflict" description="In Ref. 1; AAC53136." evidence="11" ref="1">
    <original>V</original>
    <variation>E</variation>
    <location>
        <position position="99"/>
    </location>
</feature>
<feature type="sequence conflict" description="In Ref. 1; AAC53136." evidence="11" ref="1">
    <location>
        <position position="109"/>
    </location>
</feature>
<feature type="sequence conflict" description="In Ref. 1; AAC53136." evidence="11" ref="1">
    <original>S</original>
    <variation>T</variation>
    <location>
        <position position="142"/>
    </location>
</feature>
<feature type="sequence conflict" description="In Ref. 1; AAC53136." evidence="11" ref="1">
    <original>S</original>
    <variation>T</variation>
    <location>
        <position position="477"/>
    </location>
</feature>
<feature type="sequence conflict" description="In Ref. 1; AAC53136." evidence="11" ref="1">
    <original>H</original>
    <variation>Y</variation>
    <location>
        <position position="793"/>
    </location>
</feature>
<dbReference type="EC" id="3.1.1.4" evidence="7 9"/>
<dbReference type="EC" id="3.1.1.5" evidence="2"/>
<dbReference type="EC" id="3.1.2.2" evidence="7"/>
<dbReference type="EMBL" id="U51898">
    <property type="protein sequence ID" value="AAC53136.1"/>
    <property type="molecule type" value="mRNA"/>
</dbReference>
<dbReference type="EMBL" id="AABR06052011">
    <property type="status" value="NOT_ANNOTATED_CDS"/>
    <property type="molecule type" value="Genomic_DNA"/>
</dbReference>
<dbReference type="EMBL" id="CH473950">
    <property type="protein sequence ID" value="EDM15808.1"/>
    <property type="molecule type" value="Genomic_DNA"/>
</dbReference>
<dbReference type="EMBL" id="CH473950">
    <property type="protein sequence ID" value="EDM15809.1"/>
    <property type="molecule type" value="Genomic_DNA"/>
</dbReference>
<dbReference type="EMBL" id="BC081916">
    <property type="protein sequence ID" value="AAH81916.1"/>
    <property type="molecule type" value="mRNA"/>
</dbReference>
<dbReference type="RefSeq" id="NP_001005560.1">
    <molecule id="P97570-1"/>
    <property type="nucleotide sequence ID" value="NM_001005560.1"/>
</dbReference>
<dbReference type="RefSeq" id="NP_001257725.1">
    <molecule id="P97570-2"/>
    <property type="nucleotide sequence ID" value="NM_001270796.1"/>
</dbReference>
<dbReference type="RefSeq" id="XP_063119765.1">
    <molecule id="P97570-1"/>
    <property type="nucleotide sequence ID" value="XM_063263695.1"/>
</dbReference>
<dbReference type="SMR" id="P97570"/>
<dbReference type="FunCoup" id="P97570">
    <property type="interactions" value="1894"/>
</dbReference>
<dbReference type="IntAct" id="P97570">
    <property type="interactions" value="1"/>
</dbReference>
<dbReference type="STRING" id="10116.ENSRNOP00000072104"/>
<dbReference type="ChEMBL" id="CHEMBL1075318"/>
<dbReference type="iPTMnet" id="P97570"/>
<dbReference type="PhosphoSitePlus" id="P97570"/>
<dbReference type="PaxDb" id="10116-ENSRNOP00000017104"/>
<dbReference type="GeneID" id="360426"/>
<dbReference type="KEGG" id="rno:360426"/>
<dbReference type="UCSC" id="RGD:628867">
    <molecule id="P97570-1"/>
    <property type="organism name" value="rat"/>
</dbReference>
<dbReference type="AGR" id="RGD:628867"/>
<dbReference type="CTD" id="8398"/>
<dbReference type="RGD" id="628867">
    <property type="gene designation" value="Pla2g6"/>
</dbReference>
<dbReference type="VEuPathDB" id="HostDB:ENSRNOG00000012295"/>
<dbReference type="eggNOG" id="KOG0513">
    <property type="taxonomic scope" value="Eukaryota"/>
</dbReference>
<dbReference type="HOGENOM" id="CLU_010817_0_0_1"/>
<dbReference type="InParanoid" id="P97570"/>
<dbReference type="OrthoDB" id="10021675at2759"/>
<dbReference type="PhylomeDB" id="P97570"/>
<dbReference type="TreeFam" id="TF319230"/>
<dbReference type="Reactome" id="R-RNO-1482788">
    <property type="pathway name" value="Acyl chain remodelling of PC"/>
</dbReference>
<dbReference type="Reactome" id="R-RNO-1482839">
    <property type="pathway name" value="Acyl chain remodelling of PE"/>
</dbReference>
<dbReference type="Reactome" id="R-RNO-2029485">
    <property type="pathway name" value="Role of phospholipids in phagocytosis"/>
</dbReference>
<dbReference type="Reactome" id="R-RNO-6811436">
    <property type="pathway name" value="COPI-independent Golgi-to-ER retrograde traffic"/>
</dbReference>
<dbReference type="PRO" id="PR:P97570"/>
<dbReference type="Proteomes" id="UP000002494">
    <property type="component" value="Chromosome 7"/>
</dbReference>
<dbReference type="Proteomes" id="UP000234681">
    <property type="component" value="Chromosome 7"/>
</dbReference>
<dbReference type="Bgee" id="ENSRNOG00000012295">
    <property type="expression patterns" value="Expressed in testis and 20 other cell types or tissues"/>
</dbReference>
<dbReference type="GO" id="GO:0005615">
    <property type="term" value="C:extracellular space"/>
    <property type="evidence" value="ECO:0000266"/>
    <property type="project" value="RGD"/>
</dbReference>
<dbReference type="GO" id="GO:0005743">
    <property type="term" value="C:mitochondrial inner membrane"/>
    <property type="evidence" value="ECO:0000304"/>
    <property type="project" value="Reactome"/>
</dbReference>
<dbReference type="GO" id="GO:0005739">
    <property type="term" value="C:mitochondrion"/>
    <property type="evidence" value="ECO:0000266"/>
    <property type="project" value="RGD"/>
</dbReference>
<dbReference type="GO" id="GO:0005886">
    <property type="term" value="C:plasma membrane"/>
    <property type="evidence" value="ECO:0007669"/>
    <property type="project" value="UniProtKB-SubCell"/>
</dbReference>
<dbReference type="GO" id="GO:0031143">
    <property type="term" value="C:pseudopodium"/>
    <property type="evidence" value="ECO:0007669"/>
    <property type="project" value="UniProtKB-SubCell"/>
</dbReference>
<dbReference type="GO" id="GO:0003847">
    <property type="term" value="F:1-alkyl-2-acetylglycerophosphocholine esterase activity"/>
    <property type="evidence" value="ECO:0000250"/>
    <property type="project" value="UniProtKB"/>
</dbReference>
<dbReference type="GO" id="GO:0043008">
    <property type="term" value="F:ATP-dependent protein binding"/>
    <property type="evidence" value="ECO:0000314"/>
    <property type="project" value="RGD"/>
</dbReference>
<dbReference type="GO" id="GO:0047499">
    <property type="term" value="F:calcium-independent phospholipase A2 activity"/>
    <property type="evidence" value="ECO:0000314"/>
    <property type="project" value="UniProtKB"/>
</dbReference>
<dbReference type="GO" id="GO:0005516">
    <property type="term" value="F:calmodulin binding"/>
    <property type="evidence" value="ECO:0007669"/>
    <property type="project" value="UniProtKB-KW"/>
</dbReference>
<dbReference type="GO" id="GO:0042802">
    <property type="term" value="F:identical protein binding"/>
    <property type="evidence" value="ECO:0000266"/>
    <property type="project" value="RGD"/>
</dbReference>
<dbReference type="GO" id="GO:0052816">
    <property type="term" value="F:long-chain fatty acyl-CoA hydrolase activity"/>
    <property type="evidence" value="ECO:0000314"/>
    <property type="project" value="UniProtKB"/>
</dbReference>
<dbReference type="GO" id="GO:0004622">
    <property type="term" value="F:lysophospholipase activity"/>
    <property type="evidence" value="ECO:0000250"/>
    <property type="project" value="UniProtKB"/>
</dbReference>
<dbReference type="GO" id="GO:0004623">
    <property type="term" value="F:phospholipase A2 activity"/>
    <property type="evidence" value="ECO:0000304"/>
    <property type="project" value="Reactome"/>
</dbReference>
<dbReference type="GO" id="GO:0019901">
    <property type="term" value="F:protein kinase binding"/>
    <property type="evidence" value="ECO:0000353"/>
    <property type="project" value="RGD"/>
</dbReference>
<dbReference type="GO" id="GO:0017171">
    <property type="term" value="F:serine hydrolase activity"/>
    <property type="evidence" value="ECO:0000266"/>
    <property type="project" value="RGD"/>
</dbReference>
<dbReference type="GO" id="GO:0019731">
    <property type="term" value="P:antibacterial humoral response"/>
    <property type="evidence" value="ECO:0000266"/>
    <property type="project" value="RGD"/>
</dbReference>
<dbReference type="GO" id="GO:0035965">
    <property type="term" value="P:cardiolipin acyl-chain remodeling"/>
    <property type="evidence" value="ECO:0000314"/>
    <property type="project" value="UniProtKB"/>
</dbReference>
<dbReference type="GO" id="GO:0006935">
    <property type="term" value="P:chemotaxis"/>
    <property type="evidence" value="ECO:0007669"/>
    <property type="project" value="UniProtKB-KW"/>
</dbReference>
<dbReference type="GO" id="GO:0060135">
    <property type="term" value="P:maternal process involved in female pregnancy"/>
    <property type="evidence" value="ECO:0000270"/>
    <property type="project" value="RGD"/>
</dbReference>
<dbReference type="GO" id="GO:0007613">
    <property type="term" value="P:memory"/>
    <property type="evidence" value="ECO:0000315"/>
    <property type="project" value="RGD"/>
</dbReference>
<dbReference type="GO" id="GO:0051967">
    <property type="term" value="P:negative regulation of synaptic transmission, glutamatergic"/>
    <property type="evidence" value="ECO:0000315"/>
    <property type="project" value="RGD"/>
</dbReference>
<dbReference type="GO" id="GO:0046473">
    <property type="term" value="P:phosphatidic acid metabolic process"/>
    <property type="evidence" value="ECO:0000250"/>
    <property type="project" value="UniProtKB"/>
</dbReference>
<dbReference type="GO" id="GO:0034638">
    <property type="term" value="P:phosphatidylcholine catabolic process"/>
    <property type="evidence" value="ECO:0000250"/>
    <property type="project" value="UniProtKB"/>
</dbReference>
<dbReference type="GO" id="GO:0046338">
    <property type="term" value="P:phosphatidylethanolamine catabolic process"/>
    <property type="evidence" value="ECO:0000250"/>
    <property type="project" value="UniProtKB"/>
</dbReference>
<dbReference type="GO" id="GO:0046469">
    <property type="term" value="P:platelet activating factor metabolic process"/>
    <property type="evidence" value="ECO:0000250"/>
    <property type="project" value="UniProtKB"/>
</dbReference>
<dbReference type="GO" id="GO:0090238">
    <property type="term" value="P:positive regulation of arachidonate secretion"/>
    <property type="evidence" value="ECO:0000314"/>
    <property type="project" value="RGD"/>
</dbReference>
<dbReference type="GO" id="GO:2000304">
    <property type="term" value="P:positive regulation of ceramide biosynthetic process"/>
    <property type="evidence" value="ECO:0000314"/>
    <property type="project" value="RGD"/>
</dbReference>
<dbReference type="GO" id="GO:0007204">
    <property type="term" value="P:positive regulation of cytosolic calcium ion concentration"/>
    <property type="evidence" value="ECO:0000315"/>
    <property type="project" value="RGD"/>
</dbReference>
<dbReference type="GO" id="GO:0045921">
    <property type="term" value="P:positive regulation of exocytosis"/>
    <property type="evidence" value="ECO:0000315"/>
    <property type="project" value="RGD"/>
</dbReference>
<dbReference type="GO" id="GO:0035774">
    <property type="term" value="P:positive regulation of insulin secretion involved in cellular response to glucose stimulus"/>
    <property type="evidence" value="ECO:0000314"/>
    <property type="project" value="RGD"/>
</dbReference>
<dbReference type="GO" id="GO:1902533">
    <property type="term" value="P:positive regulation of intracellular signal transduction"/>
    <property type="evidence" value="ECO:0000315"/>
    <property type="project" value="RGD"/>
</dbReference>
<dbReference type="GO" id="GO:0090200">
    <property type="term" value="P:positive regulation of release of cytochrome c from mitochondria"/>
    <property type="evidence" value="ECO:0000314"/>
    <property type="project" value="RGD"/>
</dbReference>
<dbReference type="GO" id="GO:0034976">
    <property type="term" value="P:response to endoplasmic reticulum stress"/>
    <property type="evidence" value="ECO:0000314"/>
    <property type="project" value="RGD"/>
</dbReference>
<dbReference type="GO" id="GO:0014832">
    <property type="term" value="P:urinary bladder smooth muscle contraction"/>
    <property type="evidence" value="ECO:0000315"/>
    <property type="project" value="RGD"/>
</dbReference>
<dbReference type="GO" id="GO:0042311">
    <property type="term" value="P:vasodilation"/>
    <property type="evidence" value="ECO:0000315"/>
    <property type="project" value="RGD"/>
</dbReference>
<dbReference type="CDD" id="cd07212">
    <property type="entry name" value="Pat_PNPLA9"/>
    <property type="match status" value="1"/>
</dbReference>
<dbReference type="FunFam" id="1.25.40.20:FF:000338">
    <property type="entry name" value="85/88 kDa calcium-independent phospholipase A2"/>
    <property type="match status" value="1"/>
</dbReference>
<dbReference type="FunFam" id="3.40.1090.10:FF:000006">
    <property type="entry name" value="85/88 kDa calcium-independent phospholipase A2"/>
    <property type="match status" value="1"/>
</dbReference>
<dbReference type="Gene3D" id="1.25.40.20">
    <property type="entry name" value="Ankyrin repeat-containing domain"/>
    <property type="match status" value="1"/>
</dbReference>
<dbReference type="Gene3D" id="3.40.1090.10">
    <property type="entry name" value="Cytosolic phospholipase A2 catalytic domain"/>
    <property type="match status" value="1"/>
</dbReference>
<dbReference type="InterPro" id="IPR016035">
    <property type="entry name" value="Acyl_Trfase/lysoPLipase"/>
</dbReference>
<dbReference type="InterPro" id="IPR002110">
    <property type="entry name" value="Ankyrin_rpt"/>
</dbReference>
<dbReference type="InterPro" id="IPR036770">
    <property type="entry name" value="Ankyrin_rpt-contain_sf"/>
</dbReference>
<dbReference type="InterPro" id="IPR047148">
    <property type="entry name" value="PLPL9"/>
</dbReference>
<dbReference type="InterPro" id="IPR002641">
    <property type="entry name" value="PNPLA_dom"/>
</dbReference>
<dbReference type="PANTHER" id="PTHR24139:SF34">
    <property type="entry name" value="85_88 KDA CALCIUM-INDEPENDENT PHOSPHOLIPASE A2"/>
    <property type="match status" value="1"/>
</dbReference>
<dbReference type="PANTHER" id="PTHR24139">
    <property type="entry name" value="CALCIUM-INDEPENDENT PHOSPHOLIPASE A2"/>
    <property type="match status" value="1"/>
</dbReference>
<dbReference type="Pfam" id="PF00023">
    <property type="entry name" value="Ank"/>
    <property type="match status" value="1"/>
</dbReference>
<dbReference type="Pfam" id="PF12796">
    <property type="entry name" value="Ank_2"/>
    <property type="match status" value="2"/>
</dbReference>
<dbReference type="Pfam" id="PF01734">
    <property type="entry name" value="Patatin"/>
    <property type="match status" value="1"/>
</dbReference>
<dbReference type="PRINTS" id="PR01415">
    <property type="entry name" value="ANKYRIN"/>
</dbReference>
<dbReference type="SMART" id="SM00248">
    <property type="entry name" value="ANK"/>
    <property type="match status" value="6"/>
</dbReference>
<dbReference type="SUPFAM" id="SSF48403">
    <property type="entry name" value="Ankyrin repeat"/>
    <property type="match status" value="1"/>
</dbReference>
<dbReference type="SUPFAM" id="SSF52151">
    <property type="entry name" value="FabD/lysophospholipase-like"/>
    <property type="match status" value="1"/>
</dbReference>
<dbReference type="PROSITE" id="PS50297">
    <property type="entry name" value="ANK_REP_REGION"/>
    <property type="match status" value="1"/>
</dbReference>
<dbReference type="PROSITE" id="PS50088">
    <property type="entry name" value="ANK_REPEAT"/>
    <property type="match status" value="4"/>
</dbReference>
<dbReference type="PROSITE" id="PS51635">
    <property type="entry name" value="PNPLA"/>
    <property type="match status" value="1"/>
</dbReference>
<comment type="function">
    <text evidence="1 2 3 7 8 9">Calcium-independent phospholipase involved in phospholipid remodeling with implications in cellular membrane homeostasis, mitochondrial integrity and signal transduction. Hydrolyzes the ester bond of the fatty acyl group attached at sn-1 or sn-2 position of phospholipids (phospholipase A1 and A2 activity respectively), producing lysophospholipids that are used in deacylation-reacylation cycles (PubMed:18937505, PubMed:9111008). Hydrolyzes both saturated and unsaturated long fatty acyl chains in various glycerophospholipid classes such as phosphatidylcholines, phosphatidylethanolamines and phosphatidates, with a preference for hydrolysis at sn-2 position. Can further hydrolyze lysophospholipids carrying saturated fatty acyl chains (lysophospholipase activity) (PubMed:18937505). Upon oxidative stress, contributes to remodeling of mitochondrial phospholipids in pancreatic beta cells, in a repair mechanism to reduce oxidized lipid content (PubMed:24648512). Preferentially hydrolyzes oxidized polyunsaturated fatty acyl chains from cardiolipins, yielding monolysocardiolipins that can be reacylated with unoxidized fatty acyls to regenerate native cardiolipin species. Hydrolyzes oxidized glycerophosphoethanolamines present in pancreatic islets, releasing oxidized polyunsaturated fatty acids such as hydroxyeicosatetraenoates (HETEs) (PubMed:24648512). Has thioesterase activity toward fatty-acyl CoA releasing CoA-SH known to facilitate fatty acid transport and beta-oxidation in mitochondria particularly in skeletal muscle (PubMed:18937505). Plays a role in regulation of membrane dynamics and homeostasis. Selectively hydrolyzes sn-2 arachidonoyl group in plasmalogen phospholipids, structural components of lipid rafts and myelin (By similarity). Regulates F-actin polymerization at the pseudopods, which is required for both speed and directionality of MCP1/CCL2-induced monocyte chemotaxis (By similarity). Targets membrane phospholipids to produce potent lipid signaling messengers. Generates lysophosphatidate (LPA, 1-acyl-glycerol-3-phosphate), which acts via G-protein receptors in various cell types. Has phospholipase A2 activity toward platelet-activating factor (PAF, 1-O-alkyl-2-acetyl-sn-glycero-3-phosphocholine), likely playing a role in inactivation of this potent pro-inflammatory signaling lipid (By similarity). In response to glucose, amplifies calcium influx in pancreatic beta cells to promote INS secretion (By similarity).</text>
</comment>
<comment type="catalytic activity">
    <reaction evidence="7 9">
        <text>a 1,2-diacyl-sn-glycero-3-phosphocholine + H2O = a 1-acyl-sn-glycero-3-phosphocholine + a fatty acid + H(+)</text>
        <dbReference type="Rhea" id="RHEA:15801"/>
        <dbReference type="ChEBI" id="CHEBI:15377"/>
        <dbReference type="ChEBI" id="CHEBI:15378"/>
        <dbReference type="ChEBI" id="CHEBI:28868"/>
        <dbReference type="ChEBI" id="CHEBI:57643"/>
        <dbReference type="ChEBI" id="CHEBI:58168"/>
        <dbReference type="EC" id="3.1.1.4"/>
    </reaction>
    <physiologicalReaction direction="left-to-right" evidence="12 14">
        <dbReference type="Rhea" id="RHEA:15802"/>
    </physiologicalReaction>
</comment>
<comment type="catalytic activity">
    <reaction evidence="1">
        <text>a 1-O-alkyl-2-acyl-sn-glycero-3-phosphocholine + H2O = a 1-O-alkyl-sn-glycero-3-phosphocholine + a fatty acid + H(+)</text>
        <dbReference type="Rhea" id="RHEA:36231"/>
        <dbReference type="ChEBI" id="CHEBI:15377"/>
        <dbReference type="ChEBI" id="CHEBI:15378"/>
        <dbReference type="ChEBI" id="CHEBI:28868"/>
        <dbReference type="ChEBI" id="CHEBI:30909"/>
        <dbReference type="ChEBI" id="CHEBI:36702"/>
        <dbReference type="EC" id="3.1.1.4"/>
    </reaction>
    <physiologicalReaction direction="left-to-right" evidence="1">
        <dbReference type="Rhea" id="RHEA:36232"/>
    </physiologicalReaction>
</comment>
<comment type="catalytic activity">
    <reaction evidence="1">
        <text>1,2-dihexadecanoyl-sn-glycero-3-phosphocholine + H2O = 1-hexadecanoyl-sn-glycero-3-phosphocholine + hexadecanoate + H(+)</text>
        <dbReference type="Rhea" id="RHEA:41223"/>
        <dbReference type="ChEBI" id="CHEBI:7896"/>
        <dbReference type="ChEBI" id="CHEBI:15377"/>
        <dbReference type="ChEBI" id="CHEBI:15378"/>
        <dbReference type="ChEBI" id="CHEBI:72998"/>
        <dbReference type="ChEBI" id="CHEBI:72999"/>
    </reaction>
    <physiologicalReaction direction="left-to-right" evidence="1">
        <dbReference type="Rhea" id="RHEA:41224"/>
    </physiologicalReaction>
</comment>
<comment type="catalytic activity">
    <reaction evidence="2">
        <text>1-hexadecanoyl-2-(9Z-octadecenoyl)-sn-glycero-3-phosphocholine + H2O = 1-hexadecanoyl-sn-glycero-3-phosphocholine + (9Z)-octadecenoate + H(+)</text>
        <dbReference type="Rhea" id="RHEA:38779"/>
        <dbReference type="ChEBI" id="CHEBI:15377"/>
        <dbReference type="ChEBI" id="CHEBI:15378"/>
        <dbReference type="ChEBI" id="CHEBI:30823"/>
        <dbReference type="ChEBI" id="CHEBI:72998"/>
        <dbReference type="ChEBI" id="CHEBI:73001"/>
    </reaction>
    <physiologicalReaction direction="left-to-right" evidence="2">
        <dbReference type="Rhea" id="RHEA:38780"/>
    </physiologicalReaction>
</comment>
<comment type="catalytic activity">
    <reaction evidence="7 9">
        <text>1-hexadecanoyl-2-(9Z,12Z-octadecadienoyl)-sn-glycero-3-phosphocholine + H2O = (9Z,12Z)-octadecadienoate + 1-hexadecanoyl-sn-glycero-3-phosphocholine + H(+)</text>
        <dbReference type="Rhea" id="RHEA:40811"/>
        <dbReference type="ChEBI" id="CHEBI:15377"/>
        <dbReference type="ChEBI" id="CHEBI:15378"/>
        <dbReference type="ChEBI" id="CHEBI:30245"/>
        <dbReference type="ChEBI" id="CHEBI:72998"/>
        <dbReference type="ChEBI" id="CHEBI:73002"/>
    </reaction>
    <physiologicalReaction direction="left-to-right" evidence="12 14">
        <dbReference type="Rhea" id="RHEA:40812"/>
    </physiologicalReaction>
</comment>
<comment type="catalytic activity">
    <reaction evidence="2">
        <text>1-hexadecanoyl-2-(5Z,8Z,11Z,14Z-eicosatetraenoyl)-sn-glycero-3-phosphocholine + H2O = 1-hexadecanoyl-sn-glycero-3-phosphocholine + (5Z,8Z,11Z,14Z)-eicosatetraenoate + H(+)</text>
        <dbReference type="Rhea" id="RHEA:40427"/>
        <dbReference type="ChEBI" id="CHEBI:15377"/>
        <dbReference type="ChEBI" id="CHEBI:15378"/>
        <dbReference type="ChEBI" id="CHEBI:32395"/>
        <dbReference type="ChEBI" id="CHEBI:72998"/>
        <dbReference type="ChEBI" id="CHEBI:73003"/>
    </reaction>
    <physiologicalReaction direction="left-to-right" evidence="2">
        <dbReference type="Rhea" id="RHEA:40428"/>
    </physiologicalReaction>
</comment>
<comment type="catalytic activity">
    <reaction evidence="1">
        <text>1-octadecanoyl-2-(5Z,8Z,11Z,14Z-eicosatetraenoyl)-sn-glycero-3-phosphocholine + H2O = 1-octadecanoyl-sn-glycero-3-phosphocholine + (5Z,8Z,11Z,14Z)-eicosatetraenoate + H(+)</text>
        <dbReference type="Rhea" id="RHEA:40519"/>
        <dbReference type="ChEBI" id="CHEBI:15377"/>
        <dbReference type="ChEBI" id="CHEBI:15378"/>
        <dbReference type="ChEBI" id="CHEBI:32395"/>
        <dbReference type="ChEBI" id="CHEBI:73858"/>
        <dbReference type="ChEBI" id="CHEBI:74965"/>
    </reaction>
    <physiologicalReaction direction="left-to-right" evidence="1">
        <dbReference type="Rhea" id="RHEA:40520"/>
    </physiologicalReaction>
</comment>
<comment type="catalytic activity">
    <reaction evidence="3">
        <text>1-hexadecanoyl-2-(5Z,8Z,11Z,14Z-eicosatetraenoyl)-sn-glycero-3-phosphoethanolamine + H2O = 1-hexadecanoyl-sn-glycero-3-phosphoethanolamine + (5Z,8Z,11Z,14Z)-eicosatetraenoate + H(+)</text>
        <dbReference type="Rhea" id="RHEA:40431"/>
        <dbReference type="ChEBI" id="CHEBI:15377"/>
        <dbReference type="ChEBI" id="CHEBI:15378"/>
        <dbReference type="ChEBI" id="CHEBI:32395"/>
        <dbReference type="ChEBI" id="CHEBI:73004"/>
        <dbReference type="ChEBI" id="CHEBI:73009"/>
    </reaction>
    <physiologicalReaction direction="left-to-right" evidence="3">
        <dbReference type="Rhea" id="RHEA:40432"/>
    </physiologicalReaction>
</comment>
<comment type="catalytic activity">
    <reaction evidence="1">
        <text>1,2-dihexadecanoyl-sn-glycero-3-phosphate + H2O = 1-hexadecanoyl-sn-glycero-3-phosphate + hexadecanoate + H(+)</text>
        <dbReference type="Rhea" id="RHEA:63304"/>
        <dbReference type="ChEBI" id="CHEBI:7896"/>
        <dbReference type="ChEBI" id="CHEBI:15377"/>
        <dbReference type="ChEBI" id="CHEBI:15378"/>
        <dbReference type="ChEBI" id="CHEBI:57518"/>
        <dbReference type="ChEBI" id="CHEBI:72859"/>
    </reaction>
    <physiologicalReaction direction="left-to-right" evidence="1">
        <dbReference type="Rhea" id="RHEA:63305"/>
    </physiologicalReaction>
</comment>
<comment type="catalytic activity">
    <reaction evidence="2">
        <text>a 1-acyl-sn-glycero-3-phosphocholine + H2O = sn-glycerol 3-phosphocholine + a fatty acid + H(+)</text>
        <dbReference type="Rhea" id="RHEA:15177"/>
        <dbReference type="ChEBI" id="CHEBI:15377"/>
        <dbReference type="ChEBI" id="CHEBI:15378"/>
        <dbReference type="ChEBI" id="CHEBI:16870"/>
        <dbReference type="ChEBI" id="CHEBI:28868"/>
        <dbReference type="ChEBI" id="CHEBI:58168"/>
        <dbReference type="EC" id="3.1.1.5"/>
    </reaction>
    <physiologicalReaction direction="left-to-right" evidence="2">
        <dbReference type="Rhea" id="RHEA:15178"/>
    </physiologicalReaction>
</comment>
<comment type="catalytic activity">
    <reaction evidence="2">
        <text>1-hexadecanoyl-sn-glycero-3-phosphocholine + H2O = sn-glycerol 3-phosphocholine + hexadecanoate + H(+)</text>
        <dbReference type="Rhea" id="RHEA:40435"/>
        <dbReference type="ChEBI" id="CHEBI:7896"/>
        <dbReference type="ChEBI" id="CHEBI:15377"/>
        <dbReference type="ChEBI" id="CHEBI:15378"/>
        <dbReference type="ChEBI" id="CHEBI:16870"/>
        <dbReference type="ChEBI" id="CHEBI:72998"/>
    </reaction>
    <physiologicalReaction direction="left-to-right" evidence="2">
        <dbReference type="Rhea" id="RHEA:40436"/>
    </physiologicalReaction>
</comment>
<comment type="catalytic activity">
    <reaction evidence="1">
        <text>1-(5Z,8Z,11Z,14Z-eicosatetraenoyl)-sn-glycero-3-phosphocholine + H2O = sn-glycerol 3-phosphocholine + (5Z,8Z,11Z,14Z)-eicosatetraenoate + H(+)</text>
        <dbReference type="Rhea" id="RHEA:40831"/>
        <dbReference type="ChEBI" id="CHEBI:15377"/>
        <dbReference type="ChEBI" id="CHEBI:15378"/>
        <dbReference type="ChEBI" id="CHEBI:16870"/>
        <dbReference type="ChEBI" id="CHEBI:32395"/>
        <dbReference type="ChEBI" id="CHEBI:74344"/>
    </reaction>
    <physiologicalReaction direction="left-to-right" evidence="1">
        <dbReference type="Rhea" id="RHEA:40832"/>
    </physiologicalReaction>
</comment>
<comment type="catalytic activity">
    <reaction evidence="1">
        <text>2-(5Z,8Z,11Z,14Z)-eicosatetraenoyl-sn-glycero-3-phosphocholine + H2O = sn-glycerol 3-phosphocholine + (5Z,8Z,11Z,14Z)-eicosatetraenoate + H(+)</text>
        <dbReference type="Rhea" id="RHEA:40827"/>
        <dbReference type="ChEBI" id="CHEBI:15377"/>
        <dbReference type="ChEBI" id="CHEBI:15378"/>
        <dbReference type="ChEBI" id="CHEBI:16870"/>
        <dbReference type="ChEBI" id="CHEBI:32395"/>
        <dbReference type="ChEBI" id="CHEBI:76079"/>
    </reaction>
    <physiologicalReaction direction="left-to-right" evidence="1">
        <dbReference type="Rhea" id="RHEA:40828"/>
    </physiologicalReaction>
</comment>
<comment type="catalytic activity">
    <reaction evidence="1">
        <text>1-O-hexadecyl-2-(5Z,8Z,11Z,14Z)-eicosatetraenoyl-sn-glycero-3-phosphocholine + H2O = 1-O-hexadecyl-sn-glycero-3-phosphocholine + (5Z,8Z,11Z,14Z)-eicosatetraenoate + H(+)</text>
        <dbReference type="Rhea" id="RHEA:41067"/>
        <dbReference type="ChEBI" id="CHEBI:15377"/>
        <dbReference type="ChEBI" id="CHEBI:15378"/>
        <dbReference type="ChEBI" id="CHEBI:32395"/>
        <dbReference type="ChEBI" id="CHEBI:55430"/>
        <dbReference type="ChEBI" id="CHEBI:64496"/>
    </reaction>
    <physiologicalReaction direction="left-to-right" evidence="1">
        <dbReference type="Rhea" id="RHEA:41068"/>
    </physiologicalReaction>
</comment>
<comment type="catalytic activity">
    <reaction evidence="1">
        <text>1-O-hexadecyl-2-acetyl-sn-glycero-3-phosphocholine + H2O = 1-O-hexadecyl-sn-glycero-3-phosphocholine + acetate + H(+)</text>
        <dbReference type="Rhea" id="RHEA:40479"/>
        <dbReference type="ChEBI" id="CHEBI:15377"/>
        <dbReference type="ChEBI" id="CHEBI:15378"/>
        <dbReference type="ChEBI" id="CHEBI:30089"/>
        <dbReference type="ChEBI" id="CHEBI:44811"/>
        <dbReference type="ChEBI" id="CHEBI:64496"/>
    </reaction>
    <physiologicalReaction direction="left-to-right" evidence="1">
        <dbReference type="Rhea" id="RHEA:40480"/>
    </physiologicalReaction>
</comment>
<comment type="catalytic activity">
    <reaction evidence="7">
        <text>hexadecanoyl-CoA + H2O = hexadecanoate + CoA + H(+)</text>
        <dbReference type="Rhea" id="RHEA:16645"/>
        <dbReference type="ChEBI" id="CHEBI:7896"/>
        <dbReference type="ChEBI" id="CHEBI:15377"/>
        <dbReference type="ChEBI" id="CHEBI:15378"/>
        <dbReference type="ChEBI" id="CHEBI:57287"/>
        <dbReference type="ChEBI" id="CHEBI:57379"/>
        <dbReference type="EC" id="3.1.2.2"/>
    </reaction>
    <physiologicalReaction direction="left-to-right" evidence="12">
        <dbReference type="Rhea" id="RHEA:16646"/>
    </physiologicalReaction>
</comment>
<comment type="catalytic activity">
    <reaction evidence="2">
        <text>1',3'-bis[1,2-di-(9Z-octadecenoyl)-sn-glycero-3-phospho]-glycerol + H2O = 1'-[1,2-di-(9Z-octadecenoyl)-sn-glycero-3-phospho]-3'-[1-(9Z-octadecenoyl)-sn-glycero-3-phospho]-glycerol + (9Z)-octadecenoate + H(+)</text>
        <dbReference type="Rhea" id="RHEA:40463"/>
        <dbReference type="ChEBI" id="CHEBI:15377"/>
        <dbReference type="ChEBI" id="CHEBI:15378"/>
        <dbReference type="ChEBI" id="CHEBI:30823"/>
        <dbReference type="ChEBI" id="CHEBI:77253"/>
        <dbReference type="ChEBI" id="CHEBI:77259"/>
    </reaction>
    <physiologicalReaction direction="left-to-right" evidence="2">
        <dbReference type="Rhea" id="RHEA:40464"/>
    </physiologicalReaction>
</comment>
<comment type="catalytic activity">
    <reaction evidence="2">
        <text>1'-[1,2-di-(9Z-octadecenoyl)-sn-glycero-3-phospho]-3'-[1-(9Z-octadecenoyl)-sn-glycero-3-phospho]-glycerol + H2O = 1',3'-bis-[1-(9Z-octadecenoyl)-sn-glycero-3-phospho]-glycerol + (9Z)-octadecenoate + H(+)</text>
        <dbReference type="Rhea" id="RHEA:40467"/>
        <dbReference type="ChEBI" id="CHEBI:15377"/>
        <dbReference type="ChEBI" id="CHEBI:15378"/>
        <dbReference type="ChEBI" id="CHEBI:30823"/>
        <dbReference type="ChEBI" id="CHEBI:77256"/>
        <dbReference type="ChEBI" id="CHEBI:77259"/>
    </reaction>
    <physiologicalReaction direction="left-to-right" evidence="2">
        <dbReference type="Rhea" id="RHEA:40468"/>
    </physiologicalReaction>
</comment>
<comment type="catalytic activity">
    <reaction evidence="8">
        <text>1',3'-bis-[1,2-di-(9Z,12Z-octadecadienoyl)-sn-glycero-3-phospho]-glycerol + H2O = 1'-[1,2-di-(9Z,12Z-octadecadienoyl)-sn-glycero-3-phospho]-3'-[1-(9Z,12Z-octadecadienoyl)-sn-glycero-3-phospho]-glycerol + (9Z,12Z)-octadecadienoate + H(+)</text>
        <dbReference type="Rhea" id="RHEA:52812"/>
        <dbReference type="ChEBI" id="CHEBI:15377"/>
        <dbReference type="ChEBI" id="CHEBI:15378"/>
        <dbReference type="ChEBI" id="CHEBI:30245"/>
        <dbReference type="ChEBI" id="CHEBI:83580"/>
        <dbReference type="ChEBI" id="CHEBI:83581"/>
    </reaction>
    <physiologicalReaction direction="right-to-left" evidence="13">
        <dbReference type="Rhea" id="RHEA:52814"/>
    </physiologicalReaction>
</comment>
<comment type="catalytic activity">
    <reaction evidence="8">
        <text>1-octadecanoyl-2-(15-hydroxy-(5Z,8Z,11Z,13E)-eicosatetraenoyl)-sn-glycero-3-phosphoethanolamine + H2O = 1-octadecanoyl-sn-glycero-3-phosphoethanolamine + 15-hydroxy-(5Z,8Z,11Z,13E)-eicosatetraenoate + H(+)</text>
        <dbReference type="Rhea" id="RHEA:63256"/>
        <dbReference type="ChEBI" id="CHEBI:15377"/>
        <dbReference type="ChEBI" id="CHEBI:15378"/>
        <dbReference type="ChEBI" id="CHEBI:75036"/>
        <dbReference type="ChEBI" id="CHEBI:78832"/>
        <dbReference type="ChEBI" id="CHEBI:146277"/>
    </reaction>
    <physiologicalReaction direction="left-to-right" evidence="13">
        <dbReference type="Rhea" id="RHEA:63257"/>
    </physiologicalReaction>
</comment>
<comment type="activity regulation">
    <text evidence="6 7 9">Activated by ATP (PubMed:18937505, PubMed:9111008). Inhibited by calcium-activated calmodulin (PubMed:11118454, PubMed:18937505). Inhibited by bromoenol lactone (BEL) (PubMed:18937505).</text>
</comment>
<comment type="biophysicochemical properties">
    <phDependence>
        <text evidence="9">Optimum pH is 7.</text>
    </phDependence>
</comment>
<comment type="subunit">
    <text evidence="1">Homodimer formed by catalytic domains tightly interacting through a large hydrophobic interface. The contact area involves 3 alpha helices, several loops and a part of the beta sheet from each monomer. Both active sites of the dimer are in close proximity adopting an open conformation that provide sufficient space for phospholipid access and favoring cooperativity in deacylation-reacylation reactions. Each monomer has 9 ankyrin repeats stacked side-by-side in an elongated structure oriented outwards from the catalytic core.</text>
</comment>
<comment type="subcellular location">
    <subcellularLocation>
        <location evidence="2">Cytoplasm</location>
    </subcellularLocation>
    <subcellularLocation>
        <location evidence="2">Cell membrane</location>
    </subcellularLocation>
    <subcellularLocation>
        <location evidence="3">Mitochondrion</location>
    </subcellularLocation>
    <subcellularLocation>
        <location evidence="2">Cell projection</location>
        <location evidence="2">Pseudopodium</location>
    </subcellularLocation>
    <text evidence="2">Recruited to the membrane-enriched pseudopods upon MCP1/CCL2 stimulation in monocytes.</text>
</comment>
<comment type="alternative products">
    <event type="alternative splicing"/>
    <isoform>
        <id>P97570-1</id>
        <name>Long</name>
        <sequence type="displayed"/>
    </isoform>
    <isoform>
        <id>P97570-2</id>
        <name>Short</name>
        <sequence type="described" ref="VSP_044365"/>
    </isoform>
</comment>
<comment type="tissue specificity">
    <text evidence="7 9">Expressed in pancreatic beta-cells (PubMed:9111008). Expressed in skeletal muscle (at protein level) (PubMed:18937505).</text>
</comment>
<comment type="domain">
    <text evidence="1 6">Has two putative calmodulin binding domains, the 1-9-14 and IQ motifs (PubMed:11118454). One calmodulin molecule interacts with PLA2G6 dimer, likely through 1-9-14 motif on each monomer (By similarity). Binds calmodulin in a calcium-dependent way (PubMed:11118454).</text>
</comment>
<protein>
    <recommendedName>
        <fullName>85/88 kDa calcium-independent phospholipase A2</fullName>
        <shortName>CaI-PLA2</shortName>
        <ecNumber evidence="7 9">3.1.1.4</ecNumber>
    </recommendedName>
    <alternativeName>
        <fullName>2-lysophosphatidylcholine acylhydrolase</fullName>
        <ecNumber evidence="2">3.1.1.5</ecNumber>
    </alternativeName>
    <alternativeName>
        <fullName>Group VI phospholipase A2</fullName>
        <shortName>GVI PLA2</shortName>
    </alternativeName>
    <alternativeName>
        <fullName>Intracellular membrane-associated calcium-independent phospholipase A2 beta</fullName>
        <shortName>iPLA2-beta</shortName>
    </alternativeName>
    <alternativeName>
        <fullName>Palmitoyl-CoA hydrolase</fullName>
        <ecNumber evidence="7">3.1.2.2</ecNumber>
    </alternativeName>
    <alternativeName>
        <fullName>Patatin-like phospholipase domain-containing protein 9</fullName>
        <shortName>PNPLA9</shortName>
    </alternativeName>
</protein>
<name>PLPL9_RAT</name>